<keyword id="KW-0963">Cytoplasm</keyword>
<keyword id="KW-0238">DNA-binding</keyword>
<keyword id="KW-0520">NAD</keyword>
<keyword id="KW-1185">Reference proteome</keyword>
<keyword id="KW-0678">Repressor</keyword>
<keyword id="KW-0804">Transcription</keyword>
<keyword id="KW-0805">Transcription regulation</keyword>
<organism>
    <name type="scientific">Chloroflexus aurantiacus (strain ATCC 29366 / DSM 635 / J-10-fl)</name>
    <dbReference type="NCBI Taxonomy" id="324602"/>
    <lineage>
        <taxon>Bacteria</taxon>
        <taxon>Bacillati</taxon>
        <taxon>Chloroflexota</taxon>
        <taxon>Chloroflexia</taxon>
        <taxon>Chloroflexales</taxon>
        <taxon>Chloroflexineae</taxon>
        <taxon>Chloroflexaceae</taxon>
        <taxon>Chloroflexus</taxon>
    </lineage>
</organism>
<comment type="function">
    <text evidence="1">Modulates transcription in response to changes in cellular NADH/NAD(+) redox state.</text>
</comment>
<comment type="subunit">
    <text evidence="1">Homodimer.</text>
</comment>
<comment type="subcellular location">
    <subcellularLocation>
        <location evidence="1">Cytoplasm</location>
    </subcellularLocation>
</comment>
<comment type="similarity">
    <text evidence="1">Belongs to the transcriptional regulatory Rex family.</text>
</comment>
<evidence type="ECO:0000255" key="1">
    <source>
        <dbReference type="HAMAP-Rule" id="MF_01131"/>
    </source>
</evidence>
<accession>A9WB43</accession>
<sequence length="212" mass="23918">MERSDLPPDVVIRRLPLYARSLRYLLEEGVHSVSSQELGERINVTAAQIRKDLSYFGEFGKQGIGYDVEKLLQHIERILGLHHHWPVALVGIGLLGQAIARYEGFRTEGIEIVALFDSDPAKIGQKIGDLTIQDFAHVRRIIAEKQIKMAIIAVPAQQAQRVADVLVEAGIRAILSYAPMILQVPEDVWVRYIDPVAVLQSMTYYLAREQEH</sequence>
<feature type="chain" id="PRO_1000085022" description="Redox-sensing transcriptional repressor Rex">
    <location>
        <begin position="1"/>
        <end position="212"/>
    </location>
</feature>
<feature type="DNA-binding region" description="H-T-H motif" evidence="1">
    <location>
        <begin position="17"/>
        <end position="56"/>
    </location>
</feature>
<feature type="binding site" evidence="1">
    <location>
        <begin position="91"/>
        <end position="96"/>
    </location>
    <ligand>
        <name>NAD(+)</name>
        <dbReference type="ChEBI" id="CHEBI:57540"/>
    </ligand>
</feature>
<gene>
    <name evidence="1" type="primary">rex</name>
    <name type="ordered locus">Caur_3653</name>
</gene>
<dbReference type="EMBL" id="CP000909">
    <property type="protein sequence ID" value="ABY36836.1"/>
    <property type="molecule type" value="Genomic_DNA"/>
</dbReference>
<dbReference type="RefSeq" id="WP_012259489.1">
    <property type="nucleotide sequence ID" value="NC_010175.1"/>
</dbReference>
<dbReference type="RefSeq" id="YP_001637225.1">
    <property type="nucleotide sequence ID" value="NC_010175.1"/>
</dbReference>
<dbReference type="SMR" id="A9WB43"/>
<dbReference type="FunCoup" id="A9WB43">
    <property type="interactions" value="24"/>
</dbReference>
<dbReference type="STRING" id="324602.Caur_3653"/>
<dbReference type="EnsemblBacteria" id="ABY36836">
    <property type="protein sequence ID" value="ABY36836"/>
    <property type="gene ID" value="Caur_3653"/>
</dbReference>
<dbReference type="KEGG" id="cau:Caur_3653"/>
<dbReference type="PATRIC" id="fig|324602.8.peg.4107"/>
<dbReference type="eggNOG" id="COG2344">
    <property type="taxonomic scope" value="Bacteria"/>
</dbReference>
<dbReference type="HOGENOM" id="CLU_061534_1_0_0"/>
<dbReference type="InParanoid" id="A9WB43"/>
<dbReference type="Proteomes" id="UP000002008">
    <property type="component" value="Chromosome"/>
</dbReference>
<dbReference type="GO" id="GO:0005737">
    <property type="term" value="C:cytoplasm"/>
    <property type="evidence" value="ECO:0007669"/>
    <property type="project" value="UniProtKB-SubCell"/>
</dbReference>
<dbReference type="GO" id="GO:0003677">
    <property type="term" value="F:DNA binding"/>
    <property type="evidence" value="ECO:0007669"/>
    <property type="project" value="UniProtKB-UniRule"/>
</dbReference>
<dbReference type="GO" id="GO:0003700">
    <property type="term" value="F:DNA-binding transcription factor activity"/>
    <property type="evidence" value="ECO:0007669"/>
    <property type="project" value="UniProtKB-UniRule"/>
</dbReference>
<dbReference type="GO" id="GO:0045892">
    <property type="term" value="P:negative regulation of DNA-templated transcription"/>
    <property type="evidence" value="ECO:0007669"/>
    <property type="project" value="InterPro"/>
</dbReference>
<dbReference type="GO" id="GO:0051775">
    <property type="term" value="P:response to redox state"/>
    <property type="evidence" value="ECO:0007669"/>
    <property type="project" value="InterPro"/>
</dbReference>
<dbReference type="Gene3D" id="3.40.50.720">
    <property type="entry name" value="NAD(P)-binding Rossmann-like Domain"/>
    <property type="match status" value="1"/>
</dbReference>
<dbReference type="Gene3D" id="1.10.10.10">
    <property type="entry name" value="Winged helix-like DNA-binding domain superfamily/Winged helix DNA-binding domain"/>
    <property type="match status" value="1"/>
</dbReference>
<dbReference type="HAMAP" id="MF_01131">
    <property type="entry name" value="Rex"/>
    <property type="match status" value="1"/>
</dbReference>
<dbReference type="InterPro" id="IPR003781">
    <property type="entry name" value="CoA-bd"/>
</dbReference>
<dbReference type="InterPro" id="IPR036291">
    <property type="entry name" value="NAD(P)-bd_dom_sf"/>
</dbReference>
<dbReference type="InterPro" id="IPR009718">
    <property type="entry name" value="Rex_DNA-bd_C_dom"/>
</dbReference>
<dbReference type="InterPro" id="IPR022876">
    <property type="entry name" value="Tscrpt_rep_Rex"/>
</dbReference>
<dbReference type="InterPro" id="IPR036388">
    <property type="entry name" value="WH-like_DNA-bd_sf"/>
</dbReference>
<dbReference type="InterPro" id="IPR036390">
    <property type="entry name" value="WH_DNA-bd_sf"/>
</dbReference>
<dbReference type="NCBIfam" id="NF003989">
    <property type="entry name" value="PRK05472.1-3"/>
    <property type="match status" value="1"/>
</dbReference>
<dbReference type="NCBIfam" id="NF003992">
    <property type="entry name" value="PRK05472.2-1"/>
    <property type="match status" value="1"/>
</dbReference>
<dbReference type="NCBIfam" id="NF003993">
    <property type="entry name" value="PRK05472.2-2"/>
    <property type="match status" value="1"/>
</dbReference>
<dbReference type="NCBIfam" id="NF003994">
    <property type="entry name" value="PRK05472.2-3"/>
    <property type="match status" value="1"/>
</dbReference>
<dbReference type="NCBIfam" id="NF003995">
    <property type="entry name" value="PRK05472.2-4"/>
    <property type="match status" value="1"/>
</dbReference>
<dbReference type="NCBIfam" id="NF003996">
    <property type="entry name" value="PRK05472.2-5"/>
    <property type="match status" value="1"/>
</dbReference>
<dbReference type="PANTHER" id="PTHR35786">
    <property type="entry name" value="REDOX-SENSING TRANSCRIPTIONAL REPRESSOR REX"/>
    <property type="match status" value="1"/>
</dbReference>
<dbReference type="PANTHER" id="PTHR35786:SF1">
    <property type="entry name" value="REDOX-SENSING TRANSCRIPTIONAL REPRESSOR REX 1"/>
    <property type="match status" value="1"/>
</dbReference>
<dbReference type="Pfam" id="PF02629">
    <property type="entry name" value="CoA_binding"/>
    <property type="match status" value="1"/>
</dbReference>
<dbReference type="Pfam" id="PF06971">
    <property type="entry name" value="Put_DNA-bind_N"/>
    <property type="match status" value="1"/>
</dbReference>
<dbReference type="SMART" id="SM00881">
    <property type="entry name" value="CoA_binding"/>
    <property type="match status" value="1"/>
</dbReference>
<dbReference type="SUPFAM" id="SSF51735">
    <property type="entry name" value="NAD(P)-binding Rossmann-fold domains"/>
    <property type="match status" value="1"/>
</dbReference>
<dbReference type="SUPFAM" id="SSF46785">
    <property type="entry name" value="Winged helix' DNA-binding domain"/>
    <property type="match status" value="1"/>
</dbReference>
<protein>
    <recommendedName>
        <fullName evidence="1">Redox-sensing transcriptional repressor Rex</fullName>
    </recommendedName>
</protein>
<proteinExistence type="inferred from homology"/>
<name>REX_CHLAA</name>
<reference key="1">
    <citation type="journal article" date="2011" name="BMC Genomics">
        <title>Complete genome sequence of the filamentous anoxygenic phototrophic bacterium Chloroflexus aurantiacus.</title>
        <authorList>
            <person name="Tang K.H."/>
            <person name="Barry K."/>
            <person name="Chertkov O."/>
            <person name="Dalin E."/>
            <person name="Han C.S."/>
            <person name="Hauser L.J."/>
            <person name="Honchak B.M."/>
            <person name="Karbach L.E."/>
            <person name="Land M.L."/>
            <person name="Lapidus A."/>
            <person name="Larimer F.W."/>
            <person name="Mikhailova N."/>
            <person name="Pitluck S."/>
            <person name="Pierson B.K."/>
            <person name="Blankenship R.E."/>
        </authorList>
    </citation>
    <scope>NUCLEOTIDE SEQUENCE [LARGE SCALE GENOMIC DNA]</scope>
    <source>
        <strain>ATCC 29366 / DSM 635 / J-10-fl</strain>
    </source>
</reference>